<dbReference type="EC" id="2.1.1.72"/>
<dbReference type="EMBL" id="AF011894">
    <property type="protein sequence ID" value="AAB71350.1"/>
    <property type="molecule type" value="Genomic_DNA"/>
</dbReference>
<dbReference type="EMBL" id="AL591688">
    <property type="protein sequence ID" value="CAC45498.1"/>
    <property type="molecule type" value="Genomic_DNA"/>
</dbReference>
<dbReference type="RefSeq" id="NP_385032.1">
    <property type="nucleotide sequence ID" value="NC_003047.1"/>
</dbReference>
<dbReference type="RefSeq" id="WP_010968922.1">
    <property type="nucleotide sequence ID" value="NC_003047.1"/>
</dbReference>
<dbReference type="SMR" id="O30569"/>
<dbReference type="REBASE" id="101147">
    <property type="entry name" value="M.Rga602ORF1036P"/>
</dbReference>
<dbReference type="REBASE" id="101328">
    <property type="entry name" value="M.Ret4803ORF999P"/>
</dbReference>
<dbReference type="REBASE" id="152633">
    <property type="entry name" value="M.Rsp6212ORF1017P"/>
</dbReference>
<dbReference type="REBASE" id="152636">
    <property type="entry name" value="M.Rsp621ORF1018P"/>
</dbReference>
<dbReference type="REBASE" id="152639">
    <property type="entry name" value="M.Ret561ORF1010P"/>
</dbReference>
<dbReference type="REBASE" id="152648">
    <property type="entry name" value="M.Rsp1341ORF1010P"/>
</dbReference>
<dbReference type="REBASE" id="152651">
    <property type="entry name" value="M.Rsp1314ORF1036P"/>
</dbReference>
<dbReference type="REBASE" id="152656">
    <property type="entry name" value="M.Rsp113ORF1012P"/>
</dbReference>
<dbReference type="REBASE" id="152663">
    <property type="entry name" value="M.Rph744ORF1023P"/>
</dbReference>
<dbReference type="REBASE" id="152667">
    <property type="entry name" value="M.Rph723ORF1024P"/>
</dbReference>
<dbReference type="REBASE" id="152670">
    <property type="entry name" value="M.Rph650ORF1058P"/>
</dbReference>
<dbReference type="REBASE" id="152675">
    <property type="entry name" value="M.Rph630ORF1029P"/>
</dbReference>
<dbReference type="REBASE" id="152677">
    <property type="entry name" value="M.Rph620ORF1038P"/>
</dbReference>
<dbReference type="REBASE" id="152683">
    <property type="entry name" value="M.Rph611ORF1058P"/>
</dbReference>
<dbReference type="REBASE" id="152693">
    <property type="entry name" value="M.Rph931ORF1019P"/>
</dbReference>
<dbReference type="REBASE" id="152698">
    <property type="entry name" value="M.Rph841ORF1047P"/>
</dbReference>
<dbReference type="REBASE" id="152719">
    <property type="entry name" value="M.Rph831ORF1016P"/>
</dbReference>
<dbReference type="REBASE" id="152721">
    <property type="entry name" value="M.Rph771ORF1021P"/>
</dbReference>
<dbReference type="REBASE" id="152726">
    <property type="entry name" value="M.Rph671ORF1021P"/>
</dbReference>
<dbReference type="REBASE" id="152730">
    <property type="entry name" value="M.Rph261ORF1022P"/>
</dbReference>
<dbReference type="REBASE" id="152742">
    <property type="entry name" value="M.Rph161ORF1027P"/>
</dbReference>
<dbReference type="REBASE" id="152743">
    <property type="entry name" value="M.Rsp871ORF1010P"/>
</dbReference>
<dbReference type="REBASE" id="152744">
    <property type="entry name" value="M.Rsp741ORF1010P"/>
</dbReference>
<dbReference type="REBASE" id="152747">
    <property type="entry name" value="M.Rsp731ORF1036P"/>
</dbReference>
<dbReference type="REBASE" id="152757">
    <property type="entry name" value="M.Rsp324ORF1085P"/>
</dbReference>
<dbReference type="REBASE" id="152765">
    <property type="entry name" value="M.Rsp541ORF1046P"/>
</dbReference>
<dbReference type="REBASE" id="152773">
    <property type="entry name" value="M.Rsp941ORF1046P"/>
</dbReference>
<dbReference type="REBASE" id="175266">
    <property type="entry name" value="M.Rga4872ORF1074P"/>
</dbReference>
<dbReference type="REBASE" id="175279">
    <property type="entry name" value="M.Ret8C3ORF1033P"/>
</dbReference>
<dbReference type="REBASE" id="201007">
    <property type="entry name" value="M.RspNXC14ORF1043P"/>
</dbReference>
<dbReference type="REBASE" id="201810">
    <property type="entry name" value="M.RetNXC12ORF1021P"/>
</dbReference>
<dbReference type="REBASE" id="211750">
    <property type="entry name" value="M.RphB5ORF1036P"/>
</dbReference>
<dbReference type="REBASE" id="211751">
    <property type="entry name" value="M.RspK5ORF1114P"/>
</dbReference>
<dbReference type="REBASE" id="211754">
    <property type="entry name" value="M.Rsp894ORF993P"/>
</dbReference>
<dbReference type="REBASE" id="211755">
    <property type="entry name" value="M.RspL182ORF1031P"/>
</dbReference>
<dbReference type="REBASE" id="232572">
    <property type="entry name" value="M.RspNXC24ORF960P"/>
</dbReference>
<dbReference type="REBASE" id="233040">
    <property type="entry name" value="M.SfrNXT3ORF945P"/>
</dbReference>
<dbReference type="REBASE" id="3264">
    <property type="entry name" value="M.SmeI"/>
</dbReference>
<dbReference type="REBASE" id="68117">
    <property type="entry name" value="M.RetMim1ORF1016P"/>
</dbReference>
<dbReference type="REBASE" id="87689">
    <property type="entry name" value="M.Ret4771ORF1041P"/>
</dbReference>
<dbReference type="EnsemblBacteria" id="CAC45498">
    <property type="protein sequence ID" value="CAC45498"/>
    <property type="gene ID" value="SMc00021"/>
</dbReference>
<dbReference type="KEGG" id="sme:SMc00021"/>
<dbReference type="PATRIC" id="fig|266834.11.peg.2324"/>
<dbReference type="eggNOG" id="COG2189">
    <property type="taxonomic scope" value="Bacteria"/>
</dbReference>
<dbReference type="HOGENOM" id="CLU_024927_5_1_5"/>
<dbReference type="OrthoDB" id="9800801at2"/>
<dbReference type="Proteomes" id="UP000001976">
    <property type="component" value="Chromosome"/>
</dbReference>
<dbReference type="GO" id="GO:0005737">
    <property type="term" value="C:cytoplasm"/>
    <property type="evidence" value="ECO:0007669"/>
    <property type="project" value="TreeGrafter"/>
</dbReference>
<dbReference type="GO" id="GO:0003677">
    <property type="term" value="F:DNA binding"/>
    <property type="evidence" value="ECO:0007669"/>
    <property type="project" value="UniProtKB-KW"/>
</dbReference>
<dbReference type="GO" id="GO:0008170">
    <property type="term" value="F:N-methyltransferase activity"/>
    <property type="evidence" value="ECO:0007669"/>
    <property type="project" value="InterPro"/>
</dbReference>
<dbReference type="GO" id="GO:0009007">
    <property type="term" value="F:site-specific DNA-methyltransferase (adenine-specific) activity"/>
    <property type="evidence" value="ECO:0007669"/>
    <property type="project" value="UniProtKB-EC"/>
</dbReference>
<dbReference type="GO" id="GO:0006260">
    <property type="term" value="P:DNA replication"/>
    <property type="evidence" value="ECO:0007669"/>
    <property type="project" value="UniProtKB-KW"/>
</dbReference>
<dbReference type="GO" id="GO:0032259">
    <property type="term" value="P:methylation"/>
    <property type="evidence" value="ECO:0007669"/>
    <property type="project" value="UniProtKB-KW"/>
</dbReference>
<dbReference type="FunFam" id="3.40.50.150:FF:000276">
    <property type="entry name" value="Methyltransferase"/>
    <property type="match status" value="1"/>
</dbReference>
<dbReference type="Gene3D" id="3.40.50.150">
    <property type="entry name" value="Vaccinia Virus protein VP39"/>
    <property type="match status" value="1"/>
</dbReference>
<dbReference type="InterPro" id="IPR002941">
    <property type="entry name" value="DNA_methylase_N4/N6"/>
</dbReference>
<dbReference type="InterPro" id="IPR002052">
    <property type="entry name" value="DNA_methylase_N6_adenine_CS"/>
</dbReference>
<dbReference type="InterPro" id="IPR040843">
    <property type="entry name" value="RAMA"/>
</dbReference>
<dbReference type="InterPro" id="IPR001091">
    <property type="entry name" value="RM_Methyltransferase"/>
</dbReference>
<dbReference type="InterPro" id="IPR029063">
    <property type="entry name" value="SAM-dependent_MTases_sf"/>
</dbReference>
<dbReference type="PANTHER" id="PTHR13370">
    <property type="entry name" value="RNA METHYLASE-RELATED"/>
    <property type="match status" value="1"/>
</dbReference>
<dbReference type="PANTHER" id="PTHR13370:SF3">
    <property type="entry name" value="TRNA (GUANINE(10)-N2)-METHYLTRANSFERASE HOMOLOG"/>
    <property type="match status" value="1"/>
</dbReference>
<dbReference type="Pfam" id="PF01555">
    <property type="entry name" value="N6_N4_Mtase"/>
    <property type="match status" value="1"/>
</dbReference>
<dbReference type="Pfam" id="PF18755">
    <property type="entry name" value="RAMA"/>
    <property type="match status" value="1"/>
</dbReference>
<dbReference type="PRINTS" id="PR00508">
    <property type="entry name" value="S21N4MTFRASE"/>
</dbReference>
<dbReference type="SUPFAM" id="SSF53335">
    <property type="entry name" value="S-adenosyl-L-methionine-dependent methyltransferases"/>
    <property type="match status" value="1"/>
</dbReference>
<dbReference type="PROSITE" id="PS00092">
    <property type="entry name" value="N6_MTASE"/>
    <property type="match status" value="1"/>
</dbReference>
<proteinExistence type="inferred from homology"/>
<comment type="function">
    <text evidence="2 3 6">A beta subtype methylase that recognizes the double-stranded sequence 5'-GANTC-3' and methylates A-2 on both strands (Probable) (PubMed:12654995). Overexpression leads to many branched and bloated cells, two to three times the size of wild-type cells, and cells that have 1-3 times the normal amount of DNA. Contributes to the accurate cell-cycle control of DNA replication and cellular morphology. Can fully replace its ortholog in C.crescentus (PubMed:9294447).</text>
</comment>
<comment type="catalytic activity">
    <reaction>
        <text>a 2'-deoxyadenosine in DNA + S-adenosyl-L-methionine = an N(6)-methyl-2'-deoxyadenosine in DNA + S-adenosyl-L-homocysteine + H(+)</text>
        <dbReference type="Rhea" id="RHEA:15197"/>
        <dbReference type="Rhea" id="RHEA-COMP:12418"/>
        <dbReference type="Rhea" id="RHEA-COMP:12419"/>
        <dbReference type="ChEBI" id="CHEBI:15378"/>
        <dbReference type="ChEBI" id="CHEBI:57856"/>
        <dbReference type="ChEBI" id="CHEBI:59789"/>
        <dbReference type="ChEBI" id="CHEBI:90615"/>
        <dbReference type="ChEBI" id="CHEBI:90616"/>
        <dbReference type="EC" id="2.1.1.72"/>
    </reaction>
</comment>
<comment type="disruption phenotype">
    <text evidence="2">Essential, it cannot be disrupted.</text>
</comment>
<comment type="similarity">
    <text evidence="5">Belongs to the N(4)/N(6)-methyltransferase family.</text>
</comment>
<gene>
    <name type="primary">smeIM</name>
    <name evidence="4" type="synonym">ccrM</name>
    <name type="ordered locus">R00926</name>
    <name type="ORF">SMc00021</name>
</gene>
<keyword id="KW-0235">DNA replication</keyword>
<keyword id="KW-0238">DNA-binding</keyword>
<keyword id="KW-0489">Methyltransferase</keyword>
<keyword id="KW-1185">Reference proteome</keyword>
<keyword id="KW-0949">S-adenosyl-L-methionine</keyword>
<keyword id="KW-0808">Transferase</keyword>
<protein>
    <recommendedName>
        <fullName evidence="4">DNA methyltransferase CcrM</fullName>
        <shortName>M.CcrM</shortName>
        <ecNumber>2.1.1.72</ecNumber>
    </recommendedName>
    <alternativeName>
        <fullName>Adenine-specific methyltransferase SmeI</fullName>
    </alternativeName>
    <alternativeName>
        <fullName>Modification methylase SmeI</fullName>
    </alternativeName>
    <alternativeName>
        <fullName evidence="3">Orphan methyltransferase M.SmeI</fullName>
        <shortName>M.SmeI</shortName>
    </alternativeName>
</protein>
<sequence length="376" mass="41442">MSSVVSLAEISRAARPLNWLDSIIKGDCVAALNALPDHSVDVVFADPPYNLQLGGTLHRPDQSLVDAVDDDWDQFASFEAYDAFTRAWLLACRRVLKPTGTLWVIGSYHNIFRVGAILQDLHFWVLNDIIWRKTNPMPNFKGRRFQNAHETLIWATPNAKAKGYTFNYEAMKAANDDVQMRSDWLFPICSGSERLKGDDGKKVHPTQKPEALLARILMASTKPGDVVLDPFFGSGTTGAVAKRLGRHFVGIEREQDYIDAAAERIAAVEPLGKATLSVMTGKKAEPRVAFNTLVESGLIKPGTVLTDAKRRYSAIVRADGTLASGGEAGSIHRLGAKVQGLDACNGWTFWHFEEGSVLKPIDELRSVIRNDLAKLN</sequence>
<name>CCRM_RHIME</name>
<organism>
    <name type="scientific">Rhizobium meliloti (strain 1021)</name>
    <name type="common">Ensifer meliloti</name>
    <name type="synonym">Sinorhizobium meliloti</name>
    <dbReference type="NCBI Taxonomy" id="266834"/>
    <lineage>
        <taxon>Bacteria</taxon>
        <taxon>Pseudomonadati</taxon>
        <taxon>Pseudomonadota</taxon>
        <taxon>Alphaproteobacteria</taxon>
        <taxon>Hyphomicrobiales</taxon>
        <taxon>Rhizobiaceae</taxon>
        <taxon>Sinorhizobium/Ensifer group</taxon>
        <taxon>Sinorhizobium</taxon>
    </lineage>
</organism>
<reference key="1">
    <citation type="journal article" date="1997" name="J. Bacteriol.">
        <title>The CcrM DNA methyltransferase is widespread in the alpha subdivision of proteobacteria, and its essential functions are conserved in Rhizobium meliloti and Caulobacter crescentus.</title>
        <authorList>
            <person name="Wright R."/>
            <person name="Stephens C."/>
            <person name="Shapiro L."/>
        </authorList>
    </citation>
    <scope>NUCLEOTIDE SEQUENCE [GENOMIC DNA]</scope>
    <scope>FUNCTION</scope>
    <scope>DISRUPTION PHENOTYPE</scope>
    <source>
        <strain>1021</strain>
    </source>
</reference>
<reference key="2">
    <citation type="journal article" date="2001" name="Proc. Natl. Acad. Sci. U.S.A.">
        <title>Analysis of the chromosome sequence of the legume symbiont Sinorhizobium meliloti strain 1021.</title>
        <authorList>
            <person name="Capela D."/>
            <person name="Barloy-Hubler F."/>
            <person name="Gouzy J."/>
            <person name="Bothe G."/>
            <person name="Ampe F."/>
            <person name="Batut J."/>
            <person name="Boistard P."/>
            <person name="Becker A."/>
            <person name="Boutry M."/>
            <person name="Cadieu E."/>
            <person name="Dreano S."/>
            <person name="Gloux S."/>
            <person name="Godrie T."/>
            <person name="Goffeau A."/>
            <person name="Kahn D."/>
            <person name="Kiss E."/>
            <person name="Lelaure V."/>
            <person name="Masuy D."/>
            <person name="Pohl T."/>
            <person name="Portetelle D."/>
            <person name="Puehler A."/>
            <person name="Purnelle B."/>
            <person name="Ramsperger U."/>
            <person name="Renard C."/>
            <person name="Thebault P."/>
            <person name="Vandenbol M."/>
            <person name="Weidner S."/>
            <person name="Galibert F."/>
        </authorList>
    </citation>
    <scope>NUCLEOTIDE SEQUENCE [LARGE SCALE GENOMIC DNA]</scope>
    <source>
        <strain>1021</strain>
    </source>
</reference>
<reference key="3">
    <citation type="journal article" date="2001" name="Science">
        <title>The composite genome of the legume symbiont Sinorhizobium meliloti.</title>
        <authorList>
            <person name="Galibert F."/>
            <person name="Finan T.M."/>
            <person name="Long S.R."/>
            <person name="Puehler A."/>
            <person name="Abola P."/>
            <person name="Ampe F."/>
            <person name="Barloy-Hubler F."/>
            <person name="Barnett M.J."/>
            <person name="Becker A."/>
            <person name="Boistard P."/>
            <person name="Bothe G."/>
            <person name="Boutry M."/>
            <person name="Bowser L."/>
            <person name="Buhrmester J."/>
            <person name="Cadieu E."/>
            <person name="Capela D."/>
            <person name="Chain P."/>
            <person name="Cowie A."/>
            <person name="Davis R.W."/>
            <person name="Dreano S."/>
            <person name="Federspiel N.A."/>
            <person name="Fisher R.F."/>
            <person name="Gloux S."/>
            <person name="Godrie T."/>
            <person name="Goffeau A."/>
            <person name="Golding B."/>
            <person name="Gouzy J."/>
            <person name="Gurjal M."/>
            <person name="Hernandez-Lucas I."/>
            <person name="Hong A."/>
            <person name="Huizar L."/>
            <person name="Hyman R.W."/>
            <person name="Jones T."/>
            <person name="Kahn D."/>
            <person name="Kahn M.L."/>
            <person name="Kalman S."/>
            <person name="Keating D.H."/>
            <person name="Kiss E."/>
            <person name="Komp C."/>
            <person name="Lelaure V."/>
            <person name="Masuy D."/>
            <person name="Palm C."/>
            <person name="Peck M.C."/>
            <person name="Pohl T.M."/>
            <person name="Portetelle D."/>
            <person name="Purnelle B."/>
            <person name="Ramsperger U."/>
            <person name="Surzycki R."/>
            <person name="Thebault P."/>
            <person name="Vandenbol M."/>
            <person name="Vorhoelter F.J."/>
            <person name="Weidner S."/>
            <person name="Wells D.H."/>
            <person name="Wong K."/>
            <person name="Yeh K.-C."/>
            <person name="Batut J."/>
        </authorList>
    </citation>
    <scope>NUCLEOTIDE SEQUENCE [LARGE SCALE GENOMIC DNA]</scope>
    <source>
        <strain>1021</strain>
    </source>
</reference>
<reference key="4">
    <citation type="journal article" date="2003" name="Nucleic Acids Res.">
        <title>A nomenclature for restriction enzymes, DNA methyltransferases, homing endonucleases and their genes.</title>
        <authorList>
            <person name="Roberts R.J."/>
            <person name="Belfort M."/>
            <person name="Bestor T."/>
            <person name="Bhagwat A.S."/>
            <person name="Bickle T.A."/>
            <person name="Bitinaite J."/>
            <person name="Blumenthal R.M."/>
            <person name="Degtyarev S.K."/>
            <person name="Dryden D.T."/>
            <person name="Dybvig K."/>
            <person name="Firman K."/>
            <person name="Gromova E.S."/>
            <person name="Gumport R.I."/>
            <person name="Halford S.E."/>
            <person name="Hattman S."/>
            <person name="Heitman J."/>
            <person name="Hornby D.P."/>
            <person name="Janulaitis A."/>
            <person name="Jeltsch A."/>
            <person name="Josephsen J."/>
            <person name="Kiss A."/>
            <person name="Klaenhammer T.R."/>
            <person name="Kobayashi I."/>
            <person name="Kong H."/>
            <person name="Krueger D.H."/>
            <person name="Lacks S."/>
            <person name="Marinus M.G."/>
            <person name="Miyahara M."/>
            <person name="Morgan R.D."/>
            <person name="Murray N.E."/>
            <person name="Nagaraja V."/>
            <person name="Piekarowicz A."/>
            <person name="Pingoud A."/>
            <person name="Raleigh E."/>
            <person name="Rao D.N."/>
            <person name="Reich N."/>
            <person name="Repin V.E."/>
            <person name="Selker E.U."/>
            <person name="Shaw P.C."/>
            <person name="Stein D.C."/>
            <person name="Stoddard B.L."/>
            <person name="Szybalski W."/>
            <person name="Trautner T.A."/>
            <person name="Van Etten J.L."/>
            <person name="Vitor J.M."/>
            <person name="Wilson G.G."/>
            <person name="Xu S.Y."/>
        </authorList>
    </citation>
    <scope>NOMENCLATURE</scope>
    <scope>SUBTYPE</scope>
</reference>
<feature type="chain" id="PRO_0000087988" description="DNA methyltransferase CcrM">
    <location>
        <begin position="1"/>
        <end position="376"/>
    </location>
</feature>
<feature type="domain" description="RAMA" evidence="1">
    <location>
        <begin position="273"/>
        <end position="370"/>
    </location>
</feature>
<feature type="sequence conflict" description="In Ref. 1; AAB71350." evidence="5" ref="1">
    <original>NPMPNFK</original>
    <variation>QPDAELQ</variation>
    <location>
        <begin position="135"/>
        <end position="141"/>
    </location>
</feature>
<feature type="sequence conflict" description="In Ref. 1; AAB71350." evidence="5" ref="1">
    <original>P</original>
    <variation>A</variation>
    <location>
        <position position="157"/>
    </location>
</feature>
<accession>O30569</accession>
<evidence type="ECO:0000255" key="1"/>
<evidence type="ECO:0000269" key="2">
    <source>
    </source>
</evidence>
<evidence type="ECO:0000303" key="3">
    <source>
    </source>
</evidence>
<evidence type="ECO:0000303" key="4">
    <source>
    </source>
</evidence>
<evidence type="ECO:0000305" key="5"/>
<evidence type="ECO:0000305" key="6">
    <source>
    </source>
</evidence>